<feature type="chain" id="PRO_1000069042" description="Flotillin-like protein FloA">
    <location>
        <begin position="1"/>
        <end position="329"/>
    </location>
</feature>
<feature type="transmembrane region" description="Helical" evidence="1">
    <location>
        <begin position="4"/>
        <end position="24"/>
    </location>
</feature>
<feature type="transmembrane region" description="Helical" evidence="1">
    <location>
        <begin position="26"/>
        <end position="46"/>
    </location>
</feature>
<protein>
    <recommendedName>
        <fullName evidence="1">Flotillin-like protein FloA</fullName>
    </recommendedName>
</protein>
<proteinExistence type="inferred from homology"/>
<dbReference type="EMBL" id="CP000568">
    <property type="protein sequence ID" value="ABN52092.1"/>
    <property type="molecule type" value="Genomic_DNA"/>
</dbReference>
<dbReference type="RefSeq" id="WP_011837919.1">
    <property type="nucleotide sequence ID" value="NC_009012.1"/>
</dbReference>
<dbReference type="SMR" id="A3DDR3"/>
<dbReference type="STRING" id="203119.Cthe_0858"/>
<dbReference type="GeneID" id="35805771"/>
<dbReference type="KEGG" id="cth:Cthe_0858"/>
<dbReference type="eggNOG" id="COG4864">
    <property type="taxonomic scope" value="Bacteria"/>
</dbReference>
<dbReference type="HOGENOM" id="CLU_836378_0_0_9"/>
<dbReference type="OrthoDB" id="9808365at2"/>
<dbReference type="Proteomes" id="UP000002145">
    <property type="component" value="Chromosome"/>
</dbReference>
<dbReference type="GO" id="GO:0045121">
    <property type="term" value="C:membrane raft"/>
    <property type="evidence" value="ECO:0007669"/>
    <property type="project" value="UniProtKB-SubCell"/>
</dbReference>
<dbReference type="GO" id="GO:0005886">
    <property type="term" value="C:plasma membrane"/>
    <property type="evidence" value="ECO:0007669"/>
    <property type="project" value="UniProtKB-SubCell"/>
</dbReference>
<dbReference type="HAMAP" id="MF_01562">
    <property type="entry name" value="FloA"/>
    <property type="match status" value="1"/>
</dbReference>
<dbReference type="InterPro" id="IPR022853">
    <property type="entry name" value="FloA"/>
</dbReference>
<dbReference type="NCBIfam" id="NF010186">
    <property type="entry name" value="PRK13665.1"/>
    <property type="match status" value="1"/>
</dbReference>
<dbReference type="Pfam" id="PF12127">
    <property type="entry name" value="FloA"/>
    <property type="match status" value="1"/>
</dbReference>
<reference key="1">
    <citation type="submission" date="2007-02" db="EMBL/GenBank/DDBJ databases">
        <title>Complete sequence of Clostridium thermocellum ATCC 27405.</title>
        <authorList>
            <consortium name="US DOE Joint Genome Institute"/>
            <person name="Copeland A."/>
            <person name="Lucas S."/>
            <person name="Lapidus A."/>
            <person name="Barry K."/>
            <person name="Detter J.C."/>
            <person name="Glavina del Rio T."/>
            <person name="Hammon N."/>
            <person name="Israni S."/>
            <person name="Dalin E."/>
            <person name="Tice H."/>
            <person name="Pitluck S."/>
            <person name="Chertkov O."/>
            <person name="Brettin T."/>
            <person name="Bruce D."/>
            <person name="Han C."/>
            <person name="Tapia R."/>
            <person name="Gilna P."/>
            <person name="Schmutz J."/>
            <person name="Larimer F."/>
            <person name="Land M."/>
            <person name="Hauser L."/>
            <person name="Kyrpides N."/>
            <person name="Mikhailova N."/>
            <person name="Wu J.H.D."/>
            <person name="Newcomb M."/>
            <person name="Richardson P."/>
        </authorList>
    </citation>
    <scope>NUCLEOTIDE SEQUENCE [LARGE SCALE GENOMIC DNA]</scope>
    <source>
        <strain>ATCC 27405 / DSM 1237 / JCM 9322 / NBRC 103400 / NCIMB 10682 / NRRL B-4536 / VPI 7372</strain>
    </source>
</reference>
<sequence>MDGIAFILIVGAILVFISLFFAIVPVGLWISAFAANVRVSIFTLIGMRLRRVVPSRVINPLIKATKAGINVSINKLEAHYLAGGNVDRVVNALIAAQRANIPLEFERAAAIDLAGRNVLEAVQMSVNPKVIETPVVAAIAKDGIELRAKARVTVRANIDRLVGGAGEQTIIARVGEGVVTTVGSATDHKQVLENPDAISKTVLSKGLDAGTAFEILSIDIADIDVGRNVGAQLQTDQAEADKRIAQAKAEERRAMAVAREQEMKAMVQEMRAKVVEAEAEVPKALAAALREGKIGVLDYYHLQNLIADTQMRDSISKMSKHDDSSSDKK</sequence>
<organism>
    <name type="scientific">Acetivibrio thermocellus (strain ATCC 27405 / DSM 1237 / JCM 9322 / NBRC 103400 / NCIMB 10682 / NRRL B-4536 / VPI 7372)</name>
    <name type="common">Clostridium thermocellum</name>
    <dbReference type="NCBI Taxonomy" id="203119"/>
    <lineage>
        <taxon>Bacteria</taxon>
        <taxon>Bacillati</taxon>
        <taxon>Bacillota</taxon>
        <taxon>Clostridia</taxon>
        <taxon>Eubacteriales</taxon>
        <taxon>Oscillospiraceae</taxon>
        <taxon>Acetivibrio</taxon>
    </lineage>
</organism>
<accession>A3DDR3</accession>
<keyword id="KW-1003">Cell membrane</keyword>
<keyword id="KW-0472">Membrane</keyword>
<keyword id="KW-1185">Reference proteome</keyword>
<keyword id="KW-0812">Transmembrane</keyword>
<keyword id="KW-1133">Transmembrane helix</keyword>
<comment type="function">
    <text evidence="1">Found in functional membrane microdomains (FMM) that may be equivalent to eukaryotic membrane rafts. FMMs are highly dynamic and increase in number as cells age. Flotillins are thought to be important factors in membrane fluidity.</text>
</comment>
<comment type="subunit">
    <text evidence="1">Homooligomerizes.</text>
</comment>
<comment type="subcellular location">
    <subcellularLocation>
        <location evidence="1">Cell membrane</location>
        <topology evidence="1">Multi-pass membrane protein</topology>
    </subcellularLocation>
    <subcellularLocation>
        <location evidence="1">Membrane raft</location>
        <topology evidence="1">Multi-pass membrane protein</topology>
    </subcellularLocation>
</comment>
<comment type="similarity">
    <text evidence="1">Belongs to the flotillin-like FloA family.</text>
</comment>
<gene>
    <name evidence="1" type="primary">floA</name>
    <name type="ordered locus">Cthe_0858</name>
</gene>
<evidence type="ECO:0000255" key="1">
    <source>
        <dbReference type="HAMAP-Rule" id="MF_01562"/>
    </source>
</evidence>
<name>FLOA_ACET2</name>